<proteinExistence type="inferred from homology"/>
<name>RUVC_RICFE</name>
<sequence>MIVLGIDPALGSLGWAVVAKDTAKLKYLASGIIKTNSKDEIHNRLAFINSTLEKVILEYQPNMAAIEETFVNTNSVTSLKLGYARGAIMSLIGRYNLDMREFKPNMVKKTVTGYGHAEKDQILHMIKLLLPGTSAITNSDEADAVAIAYTCHVMRV</sequence>
<organism>
    <name type="scientific">Rickettsia felis (strain ATCC VR-1525 / URRWXCal2)</name>
    <name type="common">Rickettsia azadi</name>
    <dbReference type="NCBI Taxonomy" id="315456"/>
    <lineage>
        <taxon>Bacteria</taxon>
        <taxon>Pseudomonadati</taxon>
        <taxon>Pseudomonadota</taxon>
        <taxon>Alphaproteobacteria</taxon>
        <taxon>Rickettsiales</taxon>
        <taxon>Rickettsiaceae</taxon>
        <taxon>Rickettsieae</taxon>
        <taxon>Rickettsia</taxon>
        <taxon>spotted fever group</taxon>
    </lineage>
</organism>
<reference key="1">
    <citation type="journal article" date="2005" name="PLoS Biol.">
        <title>The genome sequence of Rickettsia felis identifies the first putative conjugative plasmid in an obligate intracellular parasite.</title>
        <authorList>
            <person name="Ogata H."/>
            <person name="Renesto P."/>
            <person name="Audic S."/>
            <person name="Robert C."/>
            <person name="Blanc G."/>
            <person name="Fournier P.-E."/>
            <person name="Parinello H."/>
            <person name="Claverie J.-M."/>
            <person name="Raoult D."/>
        </authorList>
    </citation>
    <scope>NUCLEOTIDE SEQUENCE [LARGE SCALE GENOMIC DNA]</scope>
    <source>
        <strain>ATCC VR-1525 / URRWXCal2</strain>
    </source>
</reference>
<protein>
    <recommendedName>
        <fullName evidence="1">Crossover junction endodeoxyribonuclease RuvC</fullName>
        <ecNumber evidence="1">3.1.21.10</ecNumber>
    </recommendedName>
    <alternativeName>
        <fullName evidence="1">Holliday junction nuclease RuvC</fullName>
    </alternativeName>
    <alternativeName>
        <fullName evidence="1">Holliday junction resolvase RuvC</fullName>
    </alternativeName>
</protein>
<accession>Q4UKB1</accession>
<feature type="chain" id="PRO_0000225172" description="Crossover junction endodeoxyribonuclease RuvC">
    <location>
        <begin position="1"/>
        <end position="156"/>
    </location>
</feature>
<feature type="active site" evidence="1">
    <location>
        <position position="7"/>
    </location>
</feature>
<feature type="active site" evidence="1">
    <location>
        <position position="67"/>
    </location>
</feature>
<feature type="active site" evidence="1">
    <location>
        <position position="140"/>
    </location>
</feature>
<feature type="binding site" evidence="1">
    <location>
        <position position="7"/>
    </location>
    <ligand>
        <name>Mg(2+)</name>
        <dbReference type="ChEBI" id="CHEBI:18420"/>
        <label>1</label>
    </ligand>
</feature>
<feature type="binding site" evidence="1">
    <location>
        <position position="67"/>
    </location>
    <ligand>
        <name>Mg(2+)</name>
        <dbReference type="ChEBI" id="CHEBI:18420"/>
        <label>2</label>
    </ligand>
</feature>
<feature type="binding site" evidence="1">
    <location>
        <position position="140"/>
    </location>
    <ligand>
        <name>Mg(2+)</name>
        <dbReference type="ChEBI" id="CHEBI:18420"/>
        <label>1</label>
    </ligand>
</feature>
<evidence type="ECO:0000255" key="1">
    <source>
        <dbReference type="HAMAP-Rule" id="MF_00034"/>
    </source>
</evidence>
<keyword id="KW-0963">Cytoplasm</keyword>
<keyword id="KW-0227">DNA damage</keyword>
<keyword id="KW-0233">DNA recombination</keyword>
<keyword id="KW-0234">DNA repair</keyword>
<keyword id="KW-0238">DNA-binding</keyword>
<keyword id="KW-0255">Endonuclease</keyword>
<keyword id="KW-0378">Hydrolase</keyword>
<keyword id="KW-0460">Magnesium</keyword>
<keyword id="KW-0479">Metal-binding</keyword>
<keyword id="KW-0540">Nuclease</keyword>
<comment type="function">
    <text evidence="1">The RuvA-RuvB-RuvC complex processes Holliday junction (HJ) DNA during genetic recombination and DNA repair. Endonuclease that resolves HJ intermediates. Cleaves cruciform DNA by making single-stranded nicks across the HJ at symmetrical positions within the homologous arms, yielding a 5'-phosphate and a 3'-hydroxyl group; requires a central core of homology in the junction. The consensus cleavage sequence is 5'-(A/T)TT(C/G)-3'. Cleavage occurs on the 3'-side of the TT dinucleotide at the point of strand exchange. HJ branch migration catalyzed by RuvA-RuvB allows RuvC to scan DNA until it finds its consensus sequence, where it cleaves and resolves the cruciform DNA.</text>
</comment>
<comment type="catalytic activity">
    <reaction evidence="1">
        <text>Endonucleolytic cleavage at a junction such as a reciprocal single-stranded crossover between two homologous DNA duplexes (Holliday junction).</text>
        <dbReference type="EC" id="3.1.21.10"/>
    </reaction>
</comment>
<comment type="cofactor">
    <cofactor evidence="1">
        <name>Mg(2+)</name>
        <dbReference type="ChEBI" id="CHEBI:18420"/>
    </cofactor>
    <text evidence="1">Binds 2 Mg(2+) ion per subunit.</text>
</comment>
<comment type="subunit">
    <text evidence="1">Homodimer which binds Holliday junction (HJ) DNA. The HJ becomes 2-fold symmetrical on binding to RuvC with unstacked arms; it has a different conformation from HJ DNA in complex with RuvA. In the full resolvosome a probable DNA-RuvA(4)-RuvB(12)-RuvC(2) complex forms which resolves the HJ.</text>
</comment>
<comment type="subcellular location">
    <subcellularLocation>
        <location evidence="1">Cytoplasm</location>
    </subcellularLocation>
</comment>
<comment type="similarity">
    <text evidence="1">Belongs to the RuvC family.</text>
</comment>
<dbReference type="EC" id="3.1.21.10" evidence="1"/>
<dbReference type="EMBL" id="CP000053">
    <property type="protein sequence ID" value="AAY62024.1"/>
    <property type="molecule type" value="Genomic_DNA"/>
</dbReference>
<dbReference type="SMR" id="Q4UKB1"/>
<dbReference type="STRING" id="315456.RF_1173"/>
<dbReference type="KEGG" id="rfe:RF_1173"/>
<dbReference type="eggNOG" id="COG0817">
    <property type="taxonomic scope" value="Bacteria"/>
</dbReference>
<dbReference type="HOGENOM" id="CLU_091257_1_0_5"/>
<dbReference type="OrthoDB" id="9805499at2"/>
<dbReference type="Proteomes" id="UP000008548">
    <property type="component" value="Chromosome"/>
</dbReference>
<dbReference type="GO" id="GO:0005737">
    <property type="term" value="C:cytoplasm"/>
    <property type="evidence" value="ECO:0007669"/>
    <property type="project" value="UniProtKB-SubCell"/>
</dbReference>
<dbReference type="GO" id="GO:0048476">
    <property type="term" value="C:Holliday junction resolvase complex"/>
    <property type="evidence" value="ECO:0007669"/>
    <property type="project" value="UniProtKB-UniRule"/>
</dbReference>
<dbReference type="GO" id="GO:0008821">
    <property type="term" value="F:crossover junction DNA endonuclease activity"/>
    <property type="evidence" value="ECO:0007669"/>
    <property type="project" value="UniProtKB-UniRule"/>
</dbReference>
<dbReference type="GO" id="GO:0003677">
    <property type="term" value="F:DNA binding"/>
    <property type="evidence" value="ECO:0007669"/>
    <property type="project" value="UniProtKB-KW"/>
</dbReference>
<dbReference type="GO" id="GO:0000287">
    <property type="term" value="F:magnesium ion binding"/>
    <property type="evidence" value="ECO:0007669"/>
    <property type="project" value="UniProtKB-UniRule"/>
</dbReference>
<dbReference type="GO" id="GO:0006310">
    <property type="term" value="P:DNA recombination"/>
    <property type="evidence" value="ECO:0007669"/>
    <property type="project" value="UniProtKB-UniRule"/>
</dbReference>
<dbReference type="GO" id="GO:0006281">
    <property type="term" value="P:DNA repair"/>
    <property type="evidence" value="ECO:0007669"/>
    <property type="project" value="UniProtKB-UniRule"/>
</dbReference>
<dbReference type="CDD" id="cd16962">
    <property type="entry name" value="RuvC"/>
    <property type="match status" value="1"/>
</dbReference>
<dbReference type="FunFam" id="3.30.420.10:FF:000002">
    <property type="entry name" value="Crossover junction endodeoxyribonuclease RuvC"/>
    <property type="match status" value="1"/>
</dbReference>
<dbReference type="Gene3D" id="3.30.420.10">
    <property type="entry name" value="Ribonuclease H-like superfamily/Ribonuclease H"/>
    <property type="match status" value="1"/>
</dbReference>
<dbReference type="HAMAP" id="MF_00034">
    <property type="entry name" value="RuvC"/>
    <property type="match status" value="1"/>
</dbReference>
<dbReference type="InterPro" id="IPR012337">
    <property type="entry name" value="RNaseH-like_sf"/>
</dbReference>
<dbReference type="InterPro" id="IPR036397">
    <property type="entry name" value="RNaseH_sf"/>
</dbReference>
<dbReference type="InterPro" id="IPR020563">
    <property type="entry name" value="X-over_junc_endoDNase_Mg_BS"/>
</dbReference>
<dbReference type="InterPro" id="IPR002176">
    <property type="entry name" value="X-over_junc_endoDNase_RuvC"/>
</dbReference>
<dbReference type="NCBIfam" id="TIGR00228">
    <property type="entry name" value="ruvC"/>
    <property type="match status" value="1"/>
</dbReference>
<dbReference type="PANTHER" id="PTHR30194">
    <property type="entry name" value="CROSSOVER JUNCTION ENDODEOXYRIBONUCLEASE RUVC"/>
    <property type="match status" value="1"/>
</dbReference>
<dbReference type="PANTHER" id="PTHR30194:SF3">
    <property type="entry name" value="CROSSOVER JUNCTION ENDODEOXYRIBONUCLEASE RUVC"/>
    <property type="match status" value="1"/>
</dbReference>
<dbReference type="Pfam" id="PF02075">
    <property type="entry name" value="RuvC"/>
    <property type="match status" value="1"/>
</dbReference>
<dbReference type="PRINTS" id="PR00696">
    <property type="entry name" value="RSOLVASERUVC"/>
</dbReference>
<dbReference type="SUPFAM" id="SSF53098">
    <property type="entry name" value="Ribonuclease H-like"/>
    <property type="match status" value="1"/>
</dbReference>
<dbReference type="PROSITE" id="PS01321">
    <property type="entry name" value="RUVC"/>
    <property type="match status" value="1"/>
</dbReference>
<gene>
    <name evidence="1" type="primary">ruvC</name>
    <name type="ordered locus">RF_1173</name>
</gene>